<organism>
    <name type="scientific">Methylorubrum populi (strain ATCC BAA-705 / NCIMB 13946 / BJ001)</name>
    <name type="common">Methylobacterium populi</name>
    <dbReference type="NCBI Taxonomy" id="441620"/>
    <lineage>
        <taxon>Bacteria</taxon>
        <taxon>Pseudomonadati</taxon>
        <taxon>Pseudomonadota</taxon>
        <taxon>Alphaproteobacteria</taxon>
        <taxon>Hyphomicrobiales</taxon>
        <taxon>Methylobacteriaceae</taxon>
        <taxon>Methylorubrum</taxon>
    </lineage>
</organism>
<keyword id="KW-0030">Aminoacyl-tRNA synthetase</keyword>
<keyword id="KW-0067">ATP-binding</keyword>
<keyword id="KW-0963">Cytoplasm</keyword>
<keyword id="KW-0436">Ligase</keyword>
<keyword id="KW-0547">Nucleotide-binding</keyword>
<keyword id="KW-0648">Protein biosynthesis</keyword>
<sequence>MAASPLVRFAPSPTGFLHIGNARPALLNALFARRAGGRFLLRLDDTDRERSTEEFASAVAEDLGWLGITPDLFFRQSERTALYDTAAERLKAAGRLYPCYETPEELDRRRKRQLGRGLPPIYDRAALALSEADRAALEAEGRRPHWRFKLDHRVVAWNDLVRGESHVDCASLSDPVLVRADGSYLYTLPSVVDDAEVGVTDVIRGEDHVTNTGVQVQLFEALGAAIPAFGHHNLLTTADGEGLSKRLGHLSLRSLREAGYEPAAVRSLAVLTGSAEAVRPVASLDELASLVDLAHLSRAPARFDPAELDGMNARLVHEMPLDAVRERLAALGVPAEAADAFWAAVRANLGRVAEAADWWRVVAGPVTPVVSEPDFIARAARLLPEAPFDAGTWKAWTDAVKAETGAKGRALFMPLRLALTGLDHGPDLSALLPLIGRERAARRLAGETA</sequence>
<feature type="chain" id="PRO_0000367711" description="Glutamate--tRNA ligase 2">
    <location>
        <begin position="1"/>
        <end position="449"/>
    </location>
</feature>
<feature type="short sequence motif" description="'HIGH' region" evidence="1">
    <location>
        <begin position="11"/>
        <end position="21"/>
    </location>
</feature>
<feature type="short sequence motif" description="'KMSKS' region" evidence="1">
    <location>
        <begin position="242"/>
        <end position="246"/>
    </location>
</feature>
<feature type="binding site" evidence="1">
    <location>
        <position position="245"/>
    </location>
    <ligand>
        <name>ATP</name>
        <dbReference type="ChEBI" id="CHEBI:30616"/>
    </ligand>
</feature>
<comment type="function">
    <text evidence="1">Catalyzes the attachment of glutamate to tRNA(Glu) in a two-step reaction: glutamate is first activated by ATP to form Glu-AMP and then transferred to the acceptor end of tRNA(Glu).</text>
</comment>
<comment type="catalytic activity">
    <reaction evidence="1">
        <text>tRNA(Glu) + L-glutamate + ATP = L-glutamyl-tRNA(Glu) + AMP + diphosphate</text>
        <dbReference type="Rhea" id="RHEA:23540"/>
        <dbReference type="Rhea" id="RHEA-COMP:9663"/>
        <dbReference type="Rhea" id="RHEA-COMP:9680"/>
        <dbReference type="ChEBI" id="CHEBI:29985"/>
        <dbReference type="ChEBI" id="CHEBI:30616"/>
        <dbReference type="ChEBI" id="CHEBI:33019"/>
        <dbReference type="ChEBI" id="CHEBI:78442"/>
        <dbReference type="ChEBI" id="CHEBI:78520"/>
        <dbReference type="ChEBI" id="CHEBI:456215"/>
        <dbReference type="EC" id="6.1.1.17"/>
    </reaction>
</comment>
<comment type="subunit">
    <text evidence="1">Monomer.</text>
</comment>
<comment type="subcellular location">
    <subcellularLocation>
        <location evidence="1">Cytoplasm</location>
    </subcellularLocation>
</comment>
<comment type="similarity">
    <text evidence="1">Belongs to the class-I aminoacyl-tRNA synthetase family. Glutamate--tRNA ligase type 1 subfamily.</text>
</comment>
<evidence type="ECO:0000255" key="1">
    <source>
        <dbReference type="HAMAP-Rule" id="MF_00022"/>
    </source>
</evidence>
<accession>B1ZAR5</accession>
<reference key="1">
    <citation type="submission" date="2008-04" db="EMBL/GenBank/DDBJ databases">
        <title>Complete sequence of chromosome of Methylobacterium populi BJ001.</title>
        <authorList>
            <consortium name="US DOE Joint Genome Institute"/>
            <person name="Copeland A."/>
            <person name="Lucas S."/>
            <person name="Lapidus A."/>
            <person name="Glavina del Rio T."/>
            <person name="Dalin E."/>
            <person name="Tice H."/>
            <person name="Bruce D."/>
            <person name="Goodwin L."/>
            <person name="Pitluck S."/>
            <person name="Chertkov O."/>
            <person name="Brettin T."/>
            <person name="Detter J.C."/>
            <person name="Han C."/>
            <person name="Kuske C.R."/>
            <person name="Schmutz J."/>
            <person name="Larimer F."/>
            <person name="Land M."/>
            <person name="Hauser L."/>
            <person name="Kyrpides N."/>
            <person name="Mikhailova N."/>
            <person name="Marx C."/>
            <person name="Richardson P."/>
        </authorList>
    </citation>
    <scope>NUCLEOTIDE SEQUENCE [LARGE SCALE GENOMIC DNA]</scope>
    <source>
        <strain>ATCC BAA-705 / NCIMB 13946 / BJ001</strain>
    </source>
</reference>
<name>SYE2_METPB</name>
<proteinExistence type="inferred from homology"/>
<protein>
    <recommendedName>
        <fullName evidence="1">Glutamate--tRNA ligase 2</fullName>
        <ecNumber evidence="1">6.1.1.17</ecNumber>
    </recommendedName>
    <alternativeName>
        <fullName evidence="1">Glutamyl-tRNA synthetase 2</fullName>
        <shortName evidence="1">GluRS 2</shortName>
    </alternativeName>
</protein>
<dbReference type="EC" id="6.1.1.17" evidence="1"/>
<dbReference type="EMBL" id="CP001029">
    <property type="protein sequence ID" value="ACB83388.1"/>
    <property type="molecule type" value="Genomic_DNA"/>
</dbReference>
<dbReference type="RefSeq" id="WP_012456984.1">
    <property type="nucleotide sequence ID" value="NC_010725.1"/>
</dbReference>
<dbReference type="SMR" id="B1ZAR5"/>
<dbReference type="STRING" id="441620.Mpop_5295"/>
<dbReference type="KEGG" id="mpo:Mpop_5295"/>
<dbReference type="eggNOG" id="COG0008">
    <property type="taxonomic scope" value="Bacteria"/>
</dbReference>
<dbReference type="HOGENOM" id="CLU_015768_6_1_5"/>
<dbReference type="OrthoDB" id="9807503at2"/>
<dbReference type="Proteomes" id="UP000007136">
    <property type="component" value="Chromosome"/>
</dbReference>
<dbReference type="GO" id="GO:0005737">
    <property type="term" value="C:cytoplasm"/>
    <property type="evidence" value="ECO:0007669"/>
    <property type="project" value="UniProtKB-SubCell"/>
</dbReference>
<dbReference type="GO" id="GO:0005524">
    <property type="term" value="F:ATP binding"/>
    <property type="evidence" value="ECO:0007669"/>
    <property type="project" value="UniProtKB-UniRule"/>
</dbReference>
<dbReference type="GO" id="GO:0004818">
    <property type="term" value="F:glutamate-tRNA ligase activity"/>
    <property type="evidence" value="ECO:0007669"/>
    <property type="project" value="UniProtKB-UniRule"/>
</dbReference>
<dbReference type="GO" id="GO:0000049">
    <property type="term" value="F:tRNA binding"/>
    <property type="evidence" value="ECO:0007669"/>
    <property type="project" value="InterPro"/>
</dbReference>
<dbReference type="GO" id="GO:0006424">
    <property type="term" value="P:glutamyl-tRNA aminoacylation"/>
    <property type="evidence" value="ECO:0007669"/>
    <property type="project" value="UniProtKB-UniRule"/>
</dbReference>
<dbReference type="Gene3D" id="1.10.10.350">
    <property type="match status" value="1"/>
</dbReference>
<dbReference type="Gene3D" id="3.40.50.620">
    <property type="entry name" value="HUPs"/>
    <property type="match status" value="1"/>
</dbReference>
<dbReference type="HAMAP" id="MF_00022">
    <property type="entry name" value="Glu_tRNA_synth_type1"/>
    <property type="match status" value="1"/>
</dbReference>
<dbReference type="InterPro" id="IPR045462">
    <property type="entry name" value="aa-tRNA-synth_I_cd-bd"/>
</dbReference>
<dbReference type="InterPro" id="IPR020751">
    <property type="entry name" value="aa-tRNA-synth_I_codon-bd_sub2"/>
</dbReference>
<dbReference type="InterPro" id="IPR001412">
    <property type="entry name" value="aa-tRNA-synth_I_CS"/>
</dbReference>
<dbReference type="InterPro" id="IPR008925">
    <property type="entry name" value="aa_tRNA-synth_I_cd-bd_sf"/>
</dbReference>
<dbReference type="InterPro" id="IPR004527">
    <property type="entry name" value="Glu-tRNA-ligase_bac/mito"/>
</dbReference>
<dbReference type="InterPro" id="IPR000924">
    <property type="entry name" value="Glu/Gln-tRNA-synth"/>
</dbReference>
<dbReference type="InterPro" id="IPR020058">
    <property type="entry name" value="Glu/Gln-tRNA-synth_Ib_cat-dom"/>
</dbReference>
<dbReference type="InterPro" id="IPR049940">
    <property type="entry name" value="GluQ/Sye"/>
</dbReference>
<dbReference type="InterPro" id="IPR014729">
    <property type="entry name" value="Rossmann-like_a/b/a_fold"/>
</dbReference>
<dbReference type="NCBIfam" id="TIGR00464">
    <property type="entry name" value="gltX_bact"/>
    <property type="match status" value="1"/>
</dbReference>
<dbReference type="PANTHER" id="PTHR43311">
    <property type="entry name" value="GLUTAMATE--TRNA LIGASE"/>
    <property type="match status" value="1"/>
</dbReference>
<dbReference type="PANTHER" id="PTHR43311:SF2">
    <property type="entry name" value="GLUTAMATE--TRNA LIGASE, MITOCHONDRIAL-RELATED"/>
    <property type="match status" value="1"/>
</dbReference>
<dbReference type="Pfam" id="PF19269">
    <property type="entry name" value="Anticodon_2"/>
    <property type="match status" value="1"/>
</dbReference>
<dbReference type="Pfam" id="PF00749">
    <property type="entry name" value="tRNA-synt_1c"/>
    <property type="match status" value="1"/>
</dbReference>
<dbReference type="PRINTS" id="PR00987">
    <property type="entry name" value="TRNASYNTHGLU"/>
</dbReference>
<dbReference type="SUPFAM" id="SSF48163">
    <property type="entry name" value="An anticodon-binding domain of class I aminoacyl-tRNA synthetases"/>
    <property type="match status" value="1"/>
</dbReference>
<dbReference type="SUPFAM" id="SSF52374">
    <property type="entry name" value="Nucleotidylyl transferase"/>
    <property type="match status" value="1"/>
</dbReference>
<dbReference type="PROSITE" id="PS00178">
    <property type="entry name" value="AA_TRNA_LIGASE_I"/>
    <property type="match status" value="1"/>
</dbReference>
<gene>
    <name evidence="1" type="primary">gltX2</name>
    <name type="ordered locus">Mpop_5295</name>
</gene>